<proteinExistence type="evidence at protein level"/>
<sequence length="364" mass="40766">MALFNSAHGGNIREAATVLGISPDQLLDFSANINPLGMPVSVKRALIDNLDCIERYPDADYFHLHQALARHHQVPASWILAGNGETESIFTVASGLKPRRAMIVTPGFAEYGRALAQSGCEIRRWSLREADGWQLTDAILEALTPDLDCLFLCTPNNPTGLLPERPLLQAIADRCKSLNINLILDEAFIDFIPHETGFIPALKDNPHIWVLRSLTKFYAIPGLRLGYLVNSDDAAMARMRRQQMPWSVNALAALAGEVALQDSAWQQATWHWLREEGARFYQALCQLPLLTVYPGRANYLLLRCEREDIDLQRRLLTQRILIRSCANYPGLDSRYYRVAIRSAAQNERLLAALRNVLTGIAPAD</sequence>
<organism>
    <name type="scientific">Salmonella typhimurium (strain LT2 / SGSC1412 / ATCC 700720)</name>
    <dbReference type="NCBI Taxonomy" id="99287"/>
    <lineage>
        <taxon>Bacteria</taxon>
        <taxon>Pseudomonadati</taxon>
        <taxon>Pseudomonadota</taxon>
        <taxon>Gammaproteobacteria</taxon>
        <taxon>Enterobacterales</taxon>
        <taxon>Enterobacteriaceae</taxon>
        <taxon>Salmonella</taxon>
    </lineage>
</organism>
<reference key="1">
    <citation type="journal article" date="1998" name="J. Biol. Chem.">
        <title>CobD, a novel enzyme with L-threonine-O-3-phosphate decarboxylase activity, is responsible for the synthesis of (R)-1-amino-2-propanol O-2-phosphate, a proposed new intermediate in cobalamin biosynthesis in Salmonella typhimurium LT2.</title>
        <authorList>
            <person name="Brushaber K.R."/>
            <person name="O'Toole G.A."/>
            <person name="Escalante-Semerena J.C."/>
        </authorList>
    </citation>
    <scope>NUCLEOTIDE SEQUENCE [GENOMIC DNA]</scope>
    <scope>FUNCTION</scope>
    <scope>CATALYTIC ACTIVITY</scope>
    <source>
        <strain>LT2</strain>
    </source>
</reference>
<reference key="2">
    <citation type="journal article" date="2001" name="Nature">
        <title>Complete genome sequence of Salmonella enterica serovar Typhimurium LT2.</title>
        <authorList>
            <person name="McClelland M."/>
            <person name="Sanderson K.E."/>
            <person name="Spieth J."/>
            <person name="Clifton S.W."/>
            <person name="Latreille P."/>
            <person name="Courtney L."/>
            <person name="Porwollik S."/>
            <person name="Ali J."/>
            <person name="Dante M."/>
            <person name="Du F."/>
            <person name="Hou S."/>
            <person name="Layman D."/>
            <person name="Leonard S."/>
            <person name="Nguyen C."/>
            <person name="Scott K."/>
            <person name="Holmes A."/>
            <person name="Grewal N."/>
            <person name="Mulvaney E."/>
            <person name="Ryan E."/>
            <person name="Sun H."/>
            <person name="Florea L."/>
            <person name="Miller W."/>
            <person name="Stoneking T."/>
            <person name="Nhan M."/>
            <person name="Waterston R."/>
            <person name="Wilson R.K."/>
        </authorList>
    </citation>
    <scope>NUCLEOTIDE SEQUENCE [LARGE SCALE GENOMIC DNA]</scope>
    <source>
        <strain>LT2 / SGSC1412 / ATCC 700720</strain>
    </source>
</reference>
<reference evidence="8" key="3">
    <citation type="journal article" date="2002" name="Biochemistry">
        <title>Three-dimensional structure of the L-threonine-O-3-phosphate decarboxylase (CobD) enzyme from Salmonella enterica.</title>
        <authorList>
            <person name="Cheong C.-G."/>
            <person name="Bauer C.B."/>
            <person name="Brushaber K.R."/>
            <person name="Escalante-Semerena J.C."/>
            <person name="Rayment I."/>
        </authorList>
    </citation>
    <scope>X-RAY CRYSTALLOGRAPHY (1.8 ANGSTROMS) IN COMPLEX WITH PHOSPHATE AND PYRIDOXAL PHOSPHATE</scope>
    <scope>COFACTOR</scope>
    <scope>SUBUNIT</scope>
</reference>
<reference evidence="5 6 7" key="4">
    <citation type="journal article" date="2002" name="Biochemistry">
        <title>Structural studies of the L-threonine-O-3-phosphate decarboxylase (CobD) enzyme from Salmonella enterica: the apo, substrate, and product-aldimine complexes.</title>
        <authorList>
            <person name="Cheong C.-G."/>
            <person name="Escalante-Semerena J.C."/>
            <person name="Rayment I."/>
        </authorList>
    </citation>
    <scope>X-RAY CRYSTALLOGRAPHY (1.46 ANGSTROMS) IN COMPLEXES WITH PHOSPHOTHREONINE AND REACTION INTERMEDIATE</scope>
    <scope>SUBUNIT</scope>
    <scope>MASS SPECTROMETRY</scope>
</reference>
<evidence type="ECO:0000269" key="1">
    <source>
    </source>
</evidence>
<evidence type="ECO:0000269" key="2">
    <source>
    </source>
</evidence>
<evidence type="ECO:0000269" key="3">
    <source>
    </source>
</evidence>
<evidence type="ECO:0000305" key="4"/>
<evidence type="ECO:0007744" key="5">
    <source>
        <dbReference type="PDB" id="1LC5"/>
    </source>
</evidence>
<evidence type="ECO:0007744" key="6">
    <source>
        <dbReference type="PDB" id="1LC7"/>
    </source>
</evidence>
<evidence type="ECO:0007744" key="7">
    <source>
        <dbReference type="PDB" id="1LC8"/>
    </source>
</evidence>
<evidence type="ECO:0007744" key="8">
    <source>
        <dbReference type="PDB" id="1LKC"/>
    </source>
</evidence>
<evidence type="ECO:0007829" key="9">
    <source>
        <dbReference type="PDB" id="1LC5"/>
    </source>
</evidence>
<evidence type="ECO:0007829" key="10">
    <source>
        <dbReference type="PDB" id="1LC7"/>
    </source>
</evidence>
<gene>
    <name type="primary">cobD</name>
    <name type="ordered locus">STM0644</name>
</gene>
<protein>
    <recommendedName>
        <fullName>Threonine-phosphate decarboxylase</fullName>
        <ecNumber evidence="3">4.1.1.81</ecNumber>
    </recommendedName>
    <alternativeName>
        <fullName>L-threonine-O-3-phosphate decarboxylase</fullName>
    </alternativeName>
</protein>
<feature type="chain" id="PRO_0000163822" description="Threonine-phosphate decarboxylase">
    <location>
        <begin position="1"/>
        <end position="364"/>
    </location>
</feature>
<feature type="binding site" evidence="2 6">
    <location>
        <begin position="8"/>
        <end position="9"/>
    </location>
    <ligand>
        <name>O-phospho-L-threonine</name>
        <dbReference type="ChEBI" id="CHEBI:58675"/>
    </ligand>
</feature>
<feature type="binding site" evidence="2 6">
    <location>
        <position position="32"/>
    </location>
    <ligand>
        <name>O-phospho-L-threonine</name>
        <dbReference type="ChEBI" id="CHEBI:58675"/>
    </ligand>
</feature>
<feature type="binding site" evidence="2 6">
    <location>
        <position position="157"/>
    </location>
    <ligand>
        <name>O-phospho-L-threonine</name>
        <dbReference type="ChEBI" id="CHEBI:58675"/>
    </ligand>
</feature>
<feature type="binding site" evidence="2 6">
    <location>
        <position position="323"/>
    </location>
    <ligand>
        <name>O-phospho-L-threonine</name>
        <dbReference type="ChEBI" id="CHEBI:58675"/>
    </ligand>
</feature>
<feature type="binding site" evidence="2 6">
    <location>
        <position position="337"/>
    </location>
    <ligand>
        <name>O-phospho-L-threonine</name>
        <dbReference type="ChEBI" id="CHEBI:58675"/>
    </ligand>
</feature>
<feature type="modified residue" description="N6-(pyridoxal phosphate)lysine" evidence="1 8">
    <location>
        <position position="216"/>
    </location>
</feature>
<feature type="sequence conflict" description="In Ref. 1; AAC79515." evidence="4" ref="1">
    <original>S</original>
    <variation>T</variation>
    <location>
        <position position="6"/>
    </location>
</feature>
<feature type="sequence conflict" description="In Ref. 1; AAC79515." evidence="4" ref="1">
    <original>A</original>
    <variation>P</variation>
    <location>
        <position position="15"/>
    </location>
</feature>
<feature type="sequence conflict" description="In Ref. 1; AAC79515." evidence="4" ref="1">
    <original>Q</original>
    <variation>H</variation>
    <location>
        <position position="25"/>
    </location>
</feature>
<feature type="sequence conflict" description="In Ref. 1; AAC79515." evidence="4" ref="1">
    <original>S</original>
    <variation>T</variation>
    <location>
        <position position="30"/>
    </location>
</feature>
<feature type="sequence conflict" description="In Ref. 1; AAC79515." evidence="4" ref="1">
    <original>VKRA</original>
    <variation>LKPP</variation>
    <location>
        <begin position="42"/>
        <end position="45"/>
    </location>
</feature>
<feature type="strand" evidence="9">
    <location>
        <begin position="7"/>
        <end position="9"/>
    </location>
</feature>
<feature type="helix" evidence="9">
    <location>
        <begin position="13"/>
        <end position="19"/>
    </location>
</feature>
<feature type="helix" evidence="9">
    <location>
        <begin position="23"/>
        <end position="25"/>
    </location>
</feature>
<feature type="strand" evidence="9">
    <location>
        <begin position="26"/>
        <end position="28"/>
    </location>
</feature>
<feature type="helix" evidence="9">
    <location>
        <begin position="40"/>
        <end position="48"/>
    </location>
</feature>
<feature type="helix" evidence="9">
    <location>
        <begin position="50"/>
        <end position="54"/>
    </location>
</feature>
<feature type="helix" evidence="9">
    <location>
        <begin position="62"/>
        <end position="72"/>
    </location>
</feature>
<feature type="helix" evidence="9">
    <location>
        <begin position="76"/>
        <end position="78"/>
    </location>
</feature>
<feature type="strand" evidence="9">
    <location>
        <begin position="79"/>
        <end position="84"/>
    </location>
</feature>
<feature type="helix" evidence="9">
    <location>
        <begin position="85"/>
        <end position="96"/>
    </location>
</feature>
<feature type="strand" evidence="9">
    <location>
        <begin position="99"/>
        <end position="106"/>
    </location>
</feature>
<feature type="helix" evidence="9">
    <location>
        <begin position="110"/>
        <end position="117"/>
    </location>
</feature>
<feature type="strand" evidence="9">
    <location>
        <begin position="121"/>
        <end position="126"/>
    </location>
</feature>
<feature type="helix" evidence="9">
    <location>
        <begin position="129"/>
        <end position="131"/>
    </location>
</feature>
<feature type="helix" evidence="9">
    <location>
        <begin position="139"/>
        <end position="142"/>
    </location>
</feature>
<feature type="strand" evidence="9">
    <location>
        <begin position="149"/>
        <end position="155"/>
    </location>
</feature>
<feature type="turn" evidence="9">
    <location>
        <begin position="157"/>
        <end position="159"/>
    </location>
</feature>
<feature type="helix" evidence="9">
    <location>
        <begin position="165"/>
        <end position="178"/>
    </location>
</feature>
<feature type="strand" evidence="9">
    <location>
        <begin position="181"/>
        <end position="185"/>
    </location>
</feature>
<feature type="helix" evidence="9">
    <location>
        <begin position="189"/>
        <end position="191"/>
    </location>
</feature>
<feature type="helix" evidence="9">
    <location>
        <begin position="199"/>
        <end position="201"/>
    </location>
</feature>
<feature type="strand" evidence="9">
    <location>
        <begin position="208"/>
        <end position="214"/>
    </location>
</feature>
<feature type="turn" evidence="9">
    <location>
        <begin position="215"/>
        <end position="219"/>
    </location>
</feature>
<feature type="turn" evidence="9">
    <location>
        <begin position="221"/>
        <end position="223"/>
    </location>
</feature>
<feature type="strand" evidence="9">
    <location>
        <begin position="226"/>
        <end position="229"/>
    </location>
</feature>
<feature type="helix" evidence="9">
    <location>
        <begin position="233"/>
        <end position="242"/>
    </location>
</feature>
<feature type="helix" evidence="9">
    <location>
        <begin position="250"/>
        <end position="258"/>
    </location>
</feature>
<feature type="helix" evidence="9">
    <location>
        <begin position="259"/>
        <end position="261"/>
    </location>
</feature>
<feature type="helix" evidence="9">
    <location>
        <begin position="263"/>
        <end position="285"/>
    </location>
</feature>
<feature type="strand" evidence="9">
    <location>
        <begin position="290"/>
        <end position="292"/>
    </location>
</feature>
<feature type="strand" evidence="9">
    <location>
        <begin position="296"/>
        <end position="305"/>
    </location>
</feature>
<feature type="strand" evidence="10">
    <location>
        <begin position="306"/>
        <end position="308"/>
    </location>
</feature>
<feature type="helix" evidence="9">
    <location>
        <begin position="311"/>
        <end position="316"/>
    </location>
</feature>
<feature type="turn" evidence="9">
    <location>
        <begin position="317"/>
        <end position="319"/>
    </location>
</feature>
<feature type="strand" evidence="9">
    <location>
        <begin position="335"/>
        <end position="339"/>
    </location>
</feature>
<feature type="helix" evidence="9">
    <location>
        <begin position="343"/>
        <end position="356"/>
    </location>
</feature>
<name>COBD_SALTY</name>
<keyword id="KW-0002">3D-structure</keyword>
<keyword id="KW-0169">Cobalamin biosynthesis</keyword>
<keyword id="KW-0456">Lyase</keyword>
<keyword id="KW-0663">Pyridoxal phosphate</keyword>
<keyword id="KW-1185">Reference proteome</keyword>
<accession>P97084</accession>
<accession>Q8ZQZ9</accession>
<dbReference type="EC" id="4.1.1.81" evidence="3"/>
<dbReference type="EMBL" id="U90625">
    <property type="protein sequence ID" value="AAC79515.1"/>
    <property type="molecule type" value="Genomic_DNA"/>
</dbReference>
<dbReference type="EMBL" id="AE006468">
    <property type="protein sequence ID" value="AAL19595.1"/>
    <property type="molecule type" value="Genomic_DNA"/>
</dbReference>
<dbReference type="RefSeq" id="NP_459636.1">
    <property type="nucleotide sequence ID" value="NC_003197.2"/>
</dbReference>
<dbReference type="RefSeq" id="WP_001173255.1">
    <property type="nucleotide sequence ID" value="NC_003197.2"/>
</dbReference>
<dbReference type="PDB" id="1LC5">
    <property type="method" value="X-ray"/>
    <property type="resolution" value="1.46 A"/>
    <property type="chains" value="A=1-364"/>
</dbReference>
<dbReference type="PDB" id="1LC7">
    <property type="method" value="X-ray"/>
    <property type="resolution" value="1.80 A"/>
    <property type="chains" value="A=1-364"/>
</dbReference>
<dbReference type="PDB" id="1LC8">
    <property type="method" value="X-ray"/>
    <property type="resolution" value="1.80 A"/>
    <property type="chains" value="A=1-364"/>
</dbReference>
<dbReference type="PDB" id="1LKC">
    <property type="method" value="X-ray"/>
    <property type="resolution" value="1.80 A"/>
    <property type="chains" value="A=1-364"/>
</dbReference>
<dbReference type="PDBsum" id="1LC5"/>
<dbReference type="PDBsum" id="1LC7"/>
<dbReference type="PDBsum" id="1LC8"/>
<dbReference type="PDBsum" id="1LKC"/>
<dbReference type="SMR" id="P97084"/>
<dbReference type="STRING" id="99287.STM0644"/>
<dbReference type="DrugBank" id="DB02482">
    <property type="generic name" value="Phosphonothreonine"/>
</dbReference>
<dbReference type="DrugBank" id="DB03433">
    <property type="generic name" value="{3-[(3-Hydroxy-2-Methyl-5-Phosphonooxymethyl-Pyridin-4-Ylmethyl)-Amino]-2-Methyl-Propyl}-Phosphonic Acid"/>
</dbReference>
<dbReference type="PaxDb" id="99287-STM0644"/>
<dbReference type="GeneID" id="1252164"/>
<dbReference type="KEGG" id="stm:STM0644"/>
<dbReference type="PATRIC" id="fig|99287.12.peg.680"/>
<dbReference type="HOGENOM" id="CLU_017584_3_2_6"/>
<dbReference type="OMA" id="PHVWVLR"/>
<dbReference type="PhylomeDB" id="P97084"/>
<dbReference type="BioCyc" id="MetaCyc:MONOMER-12856"/>
<dbReference type="BioCyc" id="SENT99287:STM0644-MONOMER"/>
<dbReference type="BRENDA" id="4.1.1.81">
    <property type="organism ID" value="5542"/>
</dbReference>
<dbReference type="UniPathway" id="UPA00148"/>
<dbReference type="EvolutionaryTrace" id="P97084"/>
<dbReference type="Proteomes" id="UP000001014">
    <property type="component" value="Chromosome"/>
</dbReference>
<dbReference type="GO" id="GO:0042802">
    <property type="term" value="F:identical protein binding"/>
    <property type="evidence" value="ECO:0000314"/>
    <property type="project" value="UniProtKB"/>
</dbReference>
<dbReference type="GO" id="GO:0042803">
    <property type="term" value="F:protein homodimerization activity"/>
    <property type="evidence" value="ECO:0000314"/>
    <property type="project" value="UniProtKB"/>
</dbReference>
<dbReference type="GO" id="GO:0030170">
    <property type="term" value="F:pyridoxal phosphate binding"/>
    <property type="evidence" value="ECO:0000314"/>
    <property type="project" value="UniProtKB"/>
</dbReference>
<dbReference type="GO" id="GO:0048472">
    <property type="term" value="F:threonine-phosphate decarboxylase activity"/>
    <property type="evidence" value="ECO:0000314"/>
    <property type="project" value="UniProtKB"/>
</dbReference>
<dbReference type="GO" id="GO:0009236">
    <property type="term" value="P:cobalamin biosynthetic process"/>
    <property type="evidence" value="ECO:0000314"/>
    <property type="project" value="UniProtKB"/>
</dbReference>
<dbReference type="CDD" id="cd00609">
    <property type="entry name" value="AAT_like"/>
    <property type="match status" value="1"/>
</dbReference>
<dbReference type="Gene3D" id="3.90.1150.10">
    <property type="entry name" value="Aspartate Aminotransferase, domain 1"/>
    <property type="match status" value="1"/>
</dbReference>
<dbReference type="Gene3D" id="3.40.640.10">
    <property type="entry name" value="Type I PLP-dependent aspartate aminotransferase-like (Major domain)"/>
    <property type="match status" value="1"/>
</dbReference>
<dbReference type="InterPro" id="IPR004839">
    <property type="entry name" value="Aminotransferase_I/II_large"/>
</dbReference>
<dbReference type="InterPro" id="IPR005860">
    <property type="entry name" value="CobD"/>
</dbReference>
<dbReference type="InterPro" id="IPR004838">
    <property type="entry name" value="NHTrfase_class1_PyrdxlP-BS"/>
</dbReference>
<dbReference type="InterPro" id="IPR015424">
    <property type="entry name" value="PyrdxlP-dep_Trfase"/>
</dbReference>
<dbReference type="InterPro" id="IPR015421">
    <property type="entry name" value="PyrdxlP-dep_Trfase_major"/>
</dbReference>
<dbReference type="InterPro" id="IPR015422">
    <property type="entry name" value="PyrdxlP-dep_Trfase_small"/>
</dbReference>
<dbReference type="NCBIfam" id="TIGR01140">
    <property type="entry name" value="L_thr_O3P_dcar"/>
    <property type="match status" value="1"/>
</dbReference>
<dbReference type="PANTHER" id="PTHR42885">
    <property type="entry name" value="HISTIDINOL-PHOSPHATE AMINOTRANSFERASE-RELATED"/>
    <property type="match status" value="1"/>
</dbReference>
<dbReference type="PANTHER" id="PTHR42885:SF1">
    <property type="entry name" value="THREONINE-PHOSPHATE DECARBOXYLASE"/>
    <property type="match status" value="1"/>
</dbReference>
<dbReference type="Pfam" id="PF00155">
    <property type="entry name" value="Aminotran_1_2"/>
    <property type="match status" value="1"/>
</dbReference>
<dbReference type="SUPFAM" id="SSF53383">
    <property type="entry name" value="PLP-dependent transferases"/>
    <property type="match status" value="1"/>
</dbReference>
<dbReference type="PROSITE" id="PS00105">
    <property type="entry name" value="AA_TRANSFER_CLASS_1"/>
    <property type="match status" value="1"/>
</dbReference>
<comment type="function">
    <text evidence="3">Decarboxylates L-threonine-O-3-phosphate to yield (R)-1-amino-2-propanol O-2-phosphate, the precursor for the linkage between the nucleotide loop and the corrin ring in cobalamin.</text>
</comment>
<comment type="catalytic activity">
    <reaction evidence="3">
        <text>O-phospho-L-threonine + H(+) = (R)-1-aminopropan-2-yl phosphate + CO2</text>
        <dbReference type="Rhea" id="RHEA:11492"/>
        <dbReference type="ChEBI" id="CHEBI:15378"/>
        <dbReference type="ChEBI" id="CHEBI:16526"/>
        <dbReference type="ChEBI" id="CHEBI:58563"/>
        <dbReference type="ChEBI" id="CHEBI:58675"/>
        <dbReference type="EC" id="4.1.1.81"/>
    </reaction>
</comment>
<comment type="cofactor">
    <cofactor evidence="1">
        <name>pyridoxal 5'-phosphate</name>
        <dbReference type="ChEBI" id="CHEBI:597326"/>
    </cofactor>
</comment>
<comment type="pathway">
    <text>Cofactor biosynthesis; adenosylcobalamin biosynthesis.</text>
</comment>
<comment type="subunit">
    <text evidence="1 2">Homodimer.</text>
</comment>
<comment type="mass spectrometry" mass="40666.0" method="Electrospray" evidence="2"/>
<comment type="mass spectrometry" mass="40894.0" method="Electrospray" evidence="2">
    <text>With pyridoxal phosphate.</text>
</comment>
<comment type="similarity">
    <text evidence="4">Belongs to the class-II pyridoxal-phosphate-dependent aminotransferase family.</text>
</comment>